<protein>
    <recommendedName>
        <fullName>E3 ubiquitin-protein ligase DTX1</fullName>
        <ecNumber evidence="9">2.3.2.27</ecNumber>
    </recommendedName>
    <alternativeName>
        <fullName>FXI-T1</fullName>
    </alternativeName>
    <alternativeName>
        <fullName>Protein deltex-1</fullName>
        <shortName>Deltex1</shortName>
        <shortName>mDTX1</shortName>
    </alternativeName>
    <alternativeName>
        <fullName evidence="12">RING-type E3 ubiquitin transferase DTX1</fullName>
    </alternativeName>
</protein>
<sequence>MSRPGQGVMVPVNGLGFPPQNVARVVVWEWLNEHSRWRPYTATVCHHIENVLKEDARGSVVLGQVDAQLVPYIIDLQSMHQFRQDTGTMRPVRRNFYDPSSAPGKGIVWEWENDGGAWTAYDMDICITIQNAYEKQHPWLDLSSLGFCYLIYFNSMSQMNRQTRRRRRLRRRLDLAYPLTVGSIPKSQSWPVGASSGQPCSCQQCLLVNSTRAASNAILASQRRKAPIAPAAPPAPPPPPPPLPPGGPPGALVVRPSATFAGAALWAAPATGPTEPAPPPGVPPRSPSAPNGAPTPGQNNLSRPGPQRSTSVSARASIPPGVPALPVKNLNGTGPVHPALAGMTGILLCAAGLPVCLTRAPKPILHPPPVSKSDVKPVPGVPGVCRKTKKKHLKKSKNPEDVVRRYMQKVKNPPDEDCTICMERLVTASGYEGVLRNKSVRPELVGRLGRCGHMYHLLCLVAMYSNGNKDGSLQCPTCKAIYGEKTGTQPPGKMEFHLIPHSLPGFADTQTIRIVYDIPTGIQGPEHPNPGKKFTARGFPRHCYLPNNEKGRKVLRLLITAWERRLIFTIGTSNTTGESDTVVWNEIHHKTEFGSNLTGHGYPDASYLDNVLAELTAQGVSEAMAKA</sequence>
<keyword id="KW-0025">Alternative splicing</keyword>
<keyword id="KW-0963">Cytoplasm</keyword>
<keyword id="KW-0479">Metal-binding</keyword>
<keyword id="KW-0914">Notch signaling pathway</keyword>
<keyword id="KW-0539">Nucleus</keyword>
<keyword id="KW-1185">Reference proteome</keyword>
<keyword id="KW-0677">Repeat</keyword>
<keyword id="KW-0729">SH3-binding</keyword>
<keyword id="KW-0808">Transferase</keyword>
<keyword id="KW-0832">Ubl conjugation</keyword>
<keyword id="KW-0862">Zinc</keyword>
<keyword id="KW-0863">Zinc-finger</keyword>
<reference key="1">
    <citation type="journal article" date="1996" name="Cell Growth Differ.">
        <title>A novel cDNA transcript expressed in fractionated X-irradiation-induced murine thymomas.</title>
        <authorList>
            <person name="Pampeno C.L."/>
            <person name="Meruelo D."/>
        </authorList>
    </citation>
    <scope>NUCLEOTIDE SEQUENCE [MRNA] (ISOFORM 3)</scope>
    <source>
        <strain>C57BL/6J</strain>
    </source>
</reference>
<reference key="2">
    <citation type="journal article" date="2001" name="Int. J. Dev. Neurosci.">
        <title>Murine homologs of deltex define a novel gene family involved in vertebrate Notch signaling and neurogenesis.</title>
        <authorList>
            <person name="Kishi N."/>
            <person name="Tang Z."/>
            <person name="Maeda Y."/>
            <person name="Hirai A."/>
            <person name="Mo R."/>
            <person name="Ito M."/>
            <person name="Suzuki S."/>
            <person name="Nakao K."/>
            <person name="Kinoshita T."/>
            <person name="Kadesch T."/>
            <person name="Hui C.-C."/>
            <person name="Artavanis-Tsakonas S."/>
            <person name="Okano H."/>
            <person name="Matsuno K."/>
        </authorList>
    </citation>
    <scope>NUCLEOTIDE SEQUENCE [MRNA] (ISOFORM 1)</scope>
    <scope>TISSUE SPECIFICITY</scope>
    <scope>DEVELOPMENTAL STAGE</scope>
    <scope>MULTIMERIZATION</scope>
    <scope>INTERACTION WITH NOTCH1</scope>
</reference>
<reference key="3">
    <citation type="journal article" date="2005" name="Science">
        <title>The transcriptional landscape of the mammalian genome.</title>
        <authorList>
            <person name="Carninci P."/>
            <person name="Kasukawa T."/>
            <person name="Katayama S."/>
            <person name="Gough J."/>
            <person name="Frith M.C."/>
            <person name="Maeda N."/>
            <person name="Oyama R."/>
            <person name="Ravasi T."/>
            <person name="Lenhard B."/>
            <person name="Wells C."/>
            <person name="Kodzius R."/>
            <person name="Shimokawa K."/>
            <person name="Bajic V.B."/>
            <person name="Brenner S.E."/>
            <person name="Batalov S."/>
            <person name="Forrest A.R."/>
            <person name="Zavolan M."/>
            <person name="Davis M.J."/>
            <person name="Wilming L.G."/>
            <person name="Aidinis V."/>
            <person name="Allen J.E."/>
            <person name="Ambesi-Impiombato A."/>
            <person name="Apweiler R."/>
            <person name="Aturaliya R.N."/>
            <person name="Bailey T.L."/>
            <person name="Bansal M."/>
            <person name="Baxter L."/>
            <person name="Beisel K.W."/>
            <person name="Bersano T."/>
            <person name="Bono H."/>
            <person name="Chalk A.M."/>
            <person name="Chiu K.P."/>
            <person name="Choudhary V."/>
            <person name="Christoffels A."/>
            <person name="Clutterbuck D.R."/>
            <person name="Crowe M.L."/>
            <person name="Dalla E."/>
            <person name="Dalrymple B.P."/>
            <person name="de Bono B."/>
            <person name="Della Gatta G."/>
            <person name="di Bernardo D."/>
            <person name="Down T."/>
            <person name="Engstrom P."/>
            <person name="Fagiolini M."/>
            <person name="Faulkner G."/>
            <person name="Fletcher C.F."/>
            <person name="Fukushima T."/>
            <person name="Furuno M."/>
            <person name="Futaki S."/>
            <person name="Gariboldi M."/>
            <person name="Georgii-Hemming P."/>
            <person name="Gingeras T.R."/>
            <person name="Gojobori T."/>
            <person name="Green R.E."/>
            <person name="Gustincich S."/>
            <person name="Harbers M."/>
            <person name="Hayashi Y."/>
            <person name="Hensch T.K."/>
            <person name="Hirokawa N."/>
            <person name="Hill D."/>
            <person name="Huminiecki L."/>
            <person name="Iacono M."/>
            <person name="Ikeo K."/>
            <person name="Iwama A."/>
            <person name="Ishikawa T."/>
            <person name="Jakt M."/>
            <person name="Kanapin A."/>
            <person name="Katoh M."/>
            <person name="Kawasawa Y."/>
            <person name="Kelso J."/>
            <person name="Kitamura H."/>
            <person name="Kitano H."/>
            <person name="Kollias G."/>
            <person name="Krishnan S.P."/>
            <person name="Kruger A."/>
            <person name="Kummerfeld S.K."/>
            <person name="Kurochkin I.V."/>
            <person name="Lareau L.F."/>
            <person name="Lazarevic D."/>
            <person name="Lipovich L."/>
            <person name="Liu J."/>
            <person name="Liuni S."/>
            <person name="McWilliam S."/>
            <person name="Madan Babu M."/>
            <person name="Madera M."/>
            <person name="Marchionni L."/>
            <person name="Matsuda H."/>
            <person name="Matsuzawa S."/>
            <person name="Miki H."/>
            <person name="Mignone F."/>
            <person name="Miyake S."/>
            <person name="Morris K."/>
            <person name="Mottagui-Tabar S."/>
            <person name="Mulder N."/>
            <person name="Nakano N."/>
            <person name="Nakauchi H."/>
            <person name="Ng P."/>
            <person name="Nilsson R."/>
            <person name="Nishiguchi S."/>
            <person name="Nishikawa S."/>
            <person name="Nori F."/>
            <person name="Ohara O."/>
            <person name="Okazaki Y."/>
            <person name="Orlando V."/>
            <person name="Pang K.C."/>
            <person name="Pavan W.J."/>
            <person name="Pavesi G."/>
            <person name="Pesole G."/>
            <person name="Petrovsky N."/>
            <person name="Piazza S."/>
            <person name="Reed J."/>
            <person name="Reid J.F."/>
            <person name="Ring B.Z."/>
            <person name="Ringwald M."/>
            <person name="Rost B."/>
            <person name="Ruan Y."/>
            <person name="Salzberg S.L."/>
            <person name="Sandelin A."/>
            <person name="Schneider C."/>
            <person name="Schoenbach C."/>
            <person name="Sekiguchi K."/>
            <person name="Semple C.A."/>
            <person name="Seno S."/>
            <person name="Sessa L."/>
            <person name="Sheng Y."/>
            <person name="Shibata Y."/>
            <person name="Shimada H."/>
            <person name="Shimada K."/>
            <person name="Silva D."/>
            <person name="Sinclair B."/>
            <person name="Sperling S."/>
            <person name="Stupka E."/>
            <person name="Sugiura K."/>
            <person name="Sultana R."/>
            <person name="Takenaka Y."/>
            <person name="Taki K."/>
            <person name="Tammoja K."/>
            <person name="Tan S.L."/>
            <person name="Tang S."/>
            <person name="Taylor M.S."/>
            <person name="Tegner J."/>
            <person name="Teichmann S.A."/>
            <person name="Ueda H.R."/>
            <person name="van Nimwegen E."/>
            <person name="Verardo R."/>
            <person name="Wei C.L."/>
            <person name="Yagi K."/>
            <person name="Yamanishi H."/>
            <person name="Zabarovsky E."/>
            <person name="Zhu S."/>
            <person name="Zimmer A."/>
            <person name="Hide W."/>
            <person name="Bult C."/>
            <person name="Grimmond S.M."/>
            <person name="Teasdale R.D."/>
            <person name="Liu E.T."/>
            <person name="Brusic V."/>
            <person name="Quackenbush J."/>
            <person name="Wahlestedt C."/>
            <person name="Mattick J.S."/>
            <person name="Hume D.A."/>
            <person name="Kai C."/>
            <person name="Sasaki D."/>
            <person name="Tomaru Y."/>
            <person name="Fukuda S."/>
            <person name="Kanamori-Katayama M."/>
            <person name="Suzuki M."/>
            <person name="Aoki J."/>
            <person name="Arakawa T."/>
            <person name="Iida J."/>
            <person name="Imamura K."/>
            <person name="Itoh M."/>
            <person name="Kato T."/>
            <person name="Kawaji H."/>
            <person name="Kawagashira N."/>
            <person name="Kawashima T."/>
            <person name="Kojima M."/>
            <person name="Kondo S."/>
            <person name="Konno H."/>
            <person name="Nakano K."/>
            <person name="Ninomiya N."/>
            <person name="Nishio T."/>
            <person name="Okada M."/>
            <person name="Plessy C."/>
            <person name="Shibata K."/>
            <person name="Shiraki T."/>
            <person name="Suzuki S."/>
            <person name="Tagami M."/>
            <person name="Waki K."/>
            <person name="Watahiki A."/>
            <person name="Okamura-Oho Y."/>
            <person name="Suzuki H."/>
            <person name="Kawai J."/>
            <person name="Hayashizaki Y."/>
        </authorList>
    </citation>
    <scope>NUCLEOTIDE SEQUENCE [LARGE SCALE MRNA] (ISOFORM 1)</scope>
    <source>
        <strain>C57BL/6J</strain>
        <strain>NOD</strain>
        <tissue>Thymus</tissue>
    </source>
</reference>
<reference key="4">
    <citation type="journal article" date="2004" name="Genome Res.">
        <title>The status, quality, and expansion of the NIH full-length cDNA project: the Mammalian Gene Collection (MGC).</title>
        <authorList>
            <consortium name="The MGC Project Team"/>
        </authorList>
    </citation>
    <scope>NUCLEOTIDE SEQUENCE [LARGE SCALE MRNA] (ISOFORM 2)</scope>
    <source>
        <strain>C57BL/6J</strain>
        <tissue>Brain</tissue>
    </source>
</reference>
<reference key="5">
    <citation type="journal article" date="2001" name="Mech. Dev.">
        <title>Expression of Deltex1 during mouse embryogenesis: comparison with Notch1, 2 and 3 expression.</title>
        <authorList>
            <person name="Mitsiadis T.A."/>
            <person name="Gayet O."/>
            <person name="Zhang N."/>
            <person name="Carroll P."/>
        </authorList>
    </citation>
    <scope>TISSUE SPECIFICITY</scope>
    <scope>DEVELOPMENTAL STAGE</scope>
</reference>
<reference key="6">
    <citation type="journal article" date="2005" name="Mol. Cell. Biol.">
        <title>Deltex regulates T-cell activation by targeted degradation of active MEKK1.</title>
        <authorList>
            <person name="Liu W.H."/>
            <person name="Lai M.Z."/>
        </authorList>
    </citation>
    <scope>FUNCTION AS AN E3 LIGASE</scope>
    <scope>CATALYTIC ACTIVITY</scope>
</reference>
<evidence type="ECO:0000250" key="1"/>
<evidence type="ECO:0000250" key="2">
    <source>
        <dbReference type="UniProtKB" id="Q86Y01"/>
    </source>
</evidence>
<evidence type="ECO:0000255" key="3"/>
<evidence type="ECO:0000255" key="4">
    <source>
        <dbReference type="PROSITE-ProRule" id="PRU00175"/>
    </source>
</evidence>
<evidence type="ECO:0000255" key="5">
    <source>
        <dbReference type="PROSITE-ProRule" id="PRU00248"/>
    </source>
</evidence>
<evidence type="ECO:0000256" key="6">
    <source>
        <dbReference type="SAM" id="MobiDB-lite"/>
    </source>
</evidence>
<evidence type="ECO:0000269" key="7">
    <source>
    </source>
</evidence>
<evidence type="ECO:0000269" key="8">
    <source>
    </source>
</evidence>
<evidence type="ECO:0000269" key="9">
    <source>
    </source>
</evidence>
<evidence type="ECO:0000303" key="10">
    <source>
    </source>
</evidence>
<evidence type="ECO:0000303" key="11">
    <source>
    </source>
</evidence>
<evidence type="ECO:0000305" key="12"/>
<feature type="chain" id="PRO_0000219081" description="E3 ubiquitin-protein ligase DTX1">
    <location>
        <begin position="1"/>
        <end position="627"/>
    </location>
</feature>
<feature type="domain" description="WWE 1" evidence="5">
    <location>
        <begin position="14"/>
        <end position="94"/>
    </location>
</feature>
<feature type="domain" description="WWE 2" evidence="5">
    <location>
        <begin position="95"/>
        <end position="171"/>
    </location>
</feature>
<feature type="zinc finger region" description="RING-type" evidence="4">
    <location>
        <begin position="418"/>
        <end position="479"/>
    </location>
</feature>
<feature type="region of interest" description="Disordered" evidence="6">
    <location>
        <begin position="222"/>
        <end position="254"/>
    </location>
</feature>
<feature type="region of interest" description="Disordered" evidence="6">
    <location>
        <begin position="269"/>
        <end position="327"/>
    </location>
</feature>
<feature type="region of interest" description="Disordered" evidence="6">
    <location>
        <begin position="368"/>
        <end position="398"/>
    </location>
</feature>
<feature type="short sequence motif" description="SH3-binding" evidence="3">
    <location>
        <begin position="240"/>
        <end position="243"/>
    </location>
</feature>
<feature type="compositionally biased region" description="Pro residues" evidence="6">
    <location>
        <begin position="230"/>
        <end position="248"/>
    </location>
</feature>
<feature type="compositionally biased region" description="Pro residues" evidence="6">
    <location>
        <begin position="275"/>
        <end position="287"/>
    </location>
</feature>
<feature type="compositionally biased region" description="Polar residues" evidence="6">
    <location>
        <begin position="296"/>
        <end position="314"/>
    </location>
</feature>
<feature type="compositionally biased region" description="Basic residues" evidence="6">
    <location>
        <begin position="386"/>
        <end position="396"/>
    </location>
</feature>
<feature type="splice variant" id="VSP_008349" description="In isoform 3." evidence="11">
    <location>
        <begin position="1"/>
        <end position="88"/>
    </location>
</feature>
<feature type="splice variant" id="VSP_008348" description="In isoform 2." evidence="10">
    <location>
        <begin position="1"/>
        <end position="78"/>
    </location>
</feature>
<feature type="sequence conflict" description="In Ref. 3; BAC40465." evidence="12" ref="3">
    <original>C</original>
    <variation>Y</variation>
    <location>
        <position position="451"/>
    </location>
</feature>
<dbReference type="EC" id="2.3.2.27" evidence="9"/>
<dbReference type="EMBL" id="U38252">
    <property type="protein sequence ID" value="AAB02905.1"/>
    <property type="molecule type" value="mRNA"/>
</dbReference>
<dbReference type="EMBL" id="AB015422">
    <property type="protein sequence ID" value="BAB18939.1"/>
    <property type="molecule type" value="mRNA"/>
</dbReference>
<dbReference type="EMBL" id="AK088630">
    <property type="protein sequence ID" value="BAC40465.1"/>
    <property type="molecule type" value="mRNA"/>
</dbReference>
<dbReference type="EMBL" id="AK169455">
    <property type="protein sequence ID" value="BAE41183.1"/>
    <property type="molecule type" value="mRNA"/>
</dbReference>
<dbReference type="EMBL" id="BC053055">
    <property type="protein sequence ID" value="AAH53055.1"/>
    <property type="molecule type" value="mRNA"/>
</dbReference>
<dbReference type="CCDS" id="CCDS19624.1">
    <molecule id="Q61010-1"/>
</dbReference>
<dbReference type="RefSeq" id="NP_001404402.1">
    <molecule id="Q61010-1"/>
    <property type="nucleotide sequence ID" value="NM_001417473.1"/>
</dbReference>
<dbReference type="RefSeq" id="NP_001404403.1">
    <molecule id="Q61010-1"/>
    <property type="nucleotide sequence ID" value="NM_001417474.1"/>
</dbReference>
<dbReference type="RefSeq" id="NP_032078.2">
    <molecule id="Q61010-1"/>
    <property type="nucleotide sequence ID" value="NM_008052.4"/>
</dbReference>
<dbReference type="SMR" id="Q61010"/>
<dbReference type="BioGRID" id="199771">
    <property type="interactions" value="2"/>
</dbReference>
<dbReference type="FunCoup" id="Q61010">
    <property type="interactions" value="1693"/>
</dbReference>
<dbReference type="STRING" id="10090.ENSMUSP00000031607"/>
<dbReference type="GlyGen" id="Q61010">
    <property type="glycosylation" value="2 sites"/>
</dbReference>
<dbReference type="iPTMnet" id="Q61010"/>
<dbReference type="PhosphoSitePlus" id="Q61010"/>
<dbReference type="PaxDb" id="10090-ENSMUSP00000031607"/>
<dbReference type="ProteomicsDB" id="277634">
    <molecule id="Q61010-1"/>
</dbReference>
<dbReference type="ProteomicsDB" id="277635">
    <molecule id="Q61010-2"/>
</dbReference>
<dbReference type="ProteomicsDB" id="277636">
    <molecule id="Q61010-3"/>
</dbReference>
<dbReference type="Antibodypedia" id="45356">
    <property type="antibodies" value="219 antibodies from 31 providers"/>
</dbReference>
<dbReference type="DNASU" id="14357"/>
<dbReference type="Ensembl" id="ENSMUST00000031607.7">
    <molecule id="Q61010-1"/>
    <property type="protein sequence ID" value="ENSMUSP00000031607.7"/>
    <property type="gene ID" value="ENSMUSG00000029603.16"/>
</dbReference>
<dbReference type="GeneID" id="14357"/>
<dbReference type="KEGG" id="mmu:14357"/>
<dbReference type="UCSC" id="uc008zht.1">
    <molecule id="Q61010-1"/>
    <property type="organism name" value="mouse"/>
</dbReference>
<dbReference type="AGR" id="MGI:1352744"/>
<dbReference type="CTD" id="1840"/>
<dbReference type="MGI" id="MGI:1352744">
    <property type="gene designation" value="Dtx1"/>
</dbReference>
<dbReference type="VEuPathDB" id="HostDB:ENSMUSG00000029603"/>
<dbReference type="eggNOG" id="ENOG502QQ9M">
    <property type="taxonomic scope" value="Eukaryota"/>
</dbReference>
<dbReference type="GeneTree" id="ENSGT00940000160943"/>
<dbReference type="HOGENOM" id="CLU_030422_4_0_1"/>
<dbReference type="InParanoid" id="Q61010"/>
<dbReference type="OMA" id="FGYVIYF"/>
<dbReference type="OrthoDB" id="2449614at2759"/>
<dbReference type="PhylomeDB" id="Q61010"/>
<dbReference type="TreeFam" id="TF325526"/>
<dbReference type="Reactome" id="R-MMU-2122948">
    <property type="pathway name" value="Activated NOTCH1 Transmits Signal to the Nucleus"/>
</dbReference>
<dbReference type="UniPathway" id="UPA00143"/>
<dbReference type="BioGRID-ORCS" id="14357">
    <property type="hits" value="1 hit in 76 CRISPR screens"/>
</dbReference>
<dbReference type="PRO" id="PR:Q61010"/>
<dbReference type="Proteomes" id="UP000000589">
    <property type="component" value="Chromosome 5"/>
</dbReference>
<dbReference type="RNAct" id="Q61010">
    <property type="molecule type" value="protein"/>
</dbReference>
<dbReference type="Bgee" id="ENSMUSG00000029603">
    <property type="expression patterns" value="Expressed in embryonic brain and 201 other cell types or tissues"/>
</dbReference>
<dbReference type="GO" id="GO:0005829">
    <property type="term" value="C:cytosol"/>
    <property type="evidence" value="ECO:0000304"/>
    <property type="project" value="Reactome"/>
</dbReference>
<dbReference type="GO" id="GO:0016604">
    <property type="term" value="C:nuclear body"/>
    <property type="evidence" value="ECO:0007669"/>
    <property type="project" value="Ensembl"/>
</dbReference>
<dbReference type="GO" id="GO:0005112">
    <property type="term" value="F:Notch binding"/>
    <property type="evidence" value="ECO:0007669"/>
    <property type="project" value="Ensembl"/>
</dbReference>
<dbReference type="GO" id="GO:0017124">
    <property type="term" value="F:SH3 domain binding"/>
    <property type="evidence" value="ECO:0007669"/>
    <property type="project" value="UniProtKB-KW"/>
</dbReference>
<dbReference type="GO" id="GO:0016740">
    <property type="term" value="F:transferase activity"/>
    <property type="evidence" value="ECO:0007669"/>
    <property type="project" value="UniProtKB-KW"/>
</dbReference>
<dbReference type="GO" id="GO:0031625">
    <property type="term" value="F:ubiquitin protein ligase binding"/>
    <property type="evidence" value="ECO:0007669"/>
    <property type="project" value="Ensembl"/>
</dbReference>
<dbReference type="GO" id="GO:0008270">
    <property type="term" value="F:zinc ion binding"/>
    <property type="evidence" value="ECO:0007669"/>
    <property type="project" value="UniProtKB-KW"/>
</dbReference>
<dbReference type="GO" id="GO:1990830">
    <property type="term" value="P:cellular response to leukemia inhibitory factor"/>
    <property type="evidence" value="ECO:0000270"/>
    <property type="project" value="MGI"/>
</dbReference>
<dbReference type="GO" id="GO:0010001">
    <property type="term" value="P:glial cell differentiation"/>
    <property type="evidence" value="ECO:0000315"/>
    <property type="project" value="MGI"/>
</dbReference>
<dbReference type="GO" id="GO:0045665">
    <property type="term" value="P:negative regulation of neuron differentiation"/>
    <property type="evidence" value="ECO:0007669"/>
    <property type="project" value="Ensembl"/>
</dbReference>
<dbReference type="GO" id="GO:0045581">
    <property type="term" value="P:negative regulation of T cell differentiation"/>
    <property type="evidence" value="ECO:0000314"/>
    <property type="project" value="MGI"/>
</dbReference>
<dbReference type="GO" id="GO:0007219">
    <property type="term" value="P:Notch signaling pathway"/>
    <property type="evidence" value="ECO:0000314"/>
    <property type="project" value="MGI"/>
</dbReference>
<dbReference type="GO" id="GO:0016567">
    <property type="term" value="P:protein ubiquitination"/>
    <property type="evidence" value="ECO:0007669"/>
    <property type="project" value="UniProtKB-UniPathway"/>
</dbReference>
<dbReference type="GO" id="GO:0008593">
    <property type="term" value="P:regulation of Notch signaling pathway"/>
    <property type="evidence" value="ECO:0007669"/>
    <property type="project" value="Ensembl"/>
</dbReference>
<dbReference type="GO" id="GO:0030217">
    <property type="term" value="P:T cell differentiation"/>
    <property type="evidence" value="ECO:0000314"/>
    <property type="project" value="MGI"/>
</dbReference>
<dbReference type="CDD" id="cd09633">
    <property type="entry name" value="Deltex_C"/>
    <property type="match status" value="1"/>
</dbReference>
<dbReference type="CDD" id="cd16671">
    <property type="entry name" value="RING-H2_DTX1_4"/>
    <property type="match status" value="1"/>
</dbReference>
<dbReference type="FunFam" id="3.30.40.10:FF:000097">
    <property type="entry name" value="E3 ubiquitin-protein ligase DTX4"/>
    <property type="match status" value="1"/>
</dbReference>
<dbReference type="FunFam" id="3.30.720.50:FF:000004">
    <property type="entry name" value="Probable E3 ubiquitin-protein ligase DTX2"/>
    <property type="match status" value="1"/>
</dbReference>
<dbReference type="FunFam" id="3.30.720.50:FF:000005">
    <property type="entry name" value="Probable E3 ubiquitin-protein ligase DTX2"/>
    <property type="match status" value="1"/>
</dbReference>
<dbReference type="FunFam" id="3.30.390.130:FF:000001">
    <property type="entry name" value="Probable E3 ubiquitin-protein ligase DTX3"/>
    <property type="match status" value="1"/>
</dbReference>
<dbReference type="Gene3D" id="3.30.390.130">
    <property type="match status" value="1"/>
</dbReference>
<dbReference type="Gene3D" id="3.30.720.50">
    <property type="match status" value="2"/>
</dbReference>
<dbReference type="Gene3D" id="3.30.40.10">
    <property type="entry name" value="Zinc/RING finger domain, C3HC4 (zinc finger)"/>
    <property type="match status" value="1"/>
</dbReference>
<dbReference type="InterPro" id="IPR039396">
    <property type="entry name" value="Deltex_C"/>
</dbReference>
<dbReference type="InterPro" id="IPR039399">
    <property type="entry name" value="Deltex_C_sf"/>
</dbReference>
<dbReference type="InterPro" id="IPR039398">
    <property type="entry name" value="Deltex_fam"/>
</dbReference>
<dbReference type="InterPro" id="IPR018123">
    <property type="entry name" value="WWE-dom_subgr"/>
</dbReference>
<dbReference type="InterPro" id="IPR004170">
    <property type="entry name" value="WWE_dom"/>
</dbReference>
<dbReference type="InterPro" id="IPR037197">
    <property type="entry name" value="WWE_dom_sf"/>
</dbReference>
<dbReference type="InterPro" id="IPR001841">
    <property type="entry name" value="Znf_RING"/>
</dbReference>
<dbReference type="InterPro" id="IPR013083">
    <property type="entry name" value="Znf_RING/FYVE/PHD"/>
</dbReference>
<dbReference type="PANTHER" id="PTHR12622">
    <property type="entry name" value="DELTEX-RELATED"/>
    <property type="match status" value="1"/>
</dbReference>
<dbReference type="Pfam" id="PF18102">
    <property type="entry name" value="DTC"/>
    <property type="match status" value="1"/>
</dbReference>
<dbReference type="Pfam" id="PF02825">
    <property type="entry name" value="WWE"/>
    <property type="match status" value="2"/>
</dbReference>
<dbReference type="SMART" id="SM00184">
    <property type="entry name" value="RING"/>
    <property type="match status" value="1"/>
</dbReference>
<dbReference type="SMART" id="SM00678">
    <property type="entry name" value="WWE"/>
    <property type="match status" value="2"/>
</dbReference>
<dbReference type="SUPFAM" id="SSF57850">
    <property type="entry name" value="RING/U-box"/>
    <property type="match status" value="1"/>
</dbReference>
<dbReference type="SUPFAM" id="SSF117839">
    <property type="entry name" value="WWE domain"/>
    <property type="match status" value="2"/>
</dbReference>
<dbReference type="PROSITE" id="PS50918">
    <property type="entry name" value="WWE"/>
    <property type="match status" value="2"/>
</dbReference>
<dbReference type="PROSITE" id="PS50089">
    <property type="entry name" value="ZF_RING_2"/>
    <property type="match status" value="1"/>
</dbReference>
<name>DTX1_MOUSE</name>
<gene>
    <name type="primary">Dtx1</name>
</gene>
<organism>
    <name type="scientific">Mus musculus</name>
    <name type="common">Mouse</name>
    <dbReference type="NCBI Taxonomy" id="10090"/>
    <lineage>
        <taxon>Eukaryota</taxon>
        <taxon>Metazoa</taxon>
        <taxon>Chordata</taxon>
        <taxon>Craniata</taxon>
        <taxon>Vertebrata</taxon>
        <taxon>Euteleostomi</taxon>
        <taxon>Mammalia</taxon>
        <taxon>Eutheria</taxon>
        <taxon>Euarchontoglires</taxon>
        <taxon>Glires</taxon>
        <taxon>Rodentia</taxon>
        <taxon>Myomorpha</taxon>
        <taxon>Muroidea</taxon>
        <taxon>Muridae</taxon>
        <taxon>Murinae</taxon>
        <taxon>Mus</taxon>
        <taxon>Mus</taxon>
    </lineage>
</organism>
<comment type="function">
    <text evidence="9">Regulator of Notch signaling, a signaling pathway involved in cell-cell communications that regulates a broad spectrum of cell-fate determinations. Mainly acts as a positive regulator of Notch, but it also acts as a negative regulator, depending on the developmental and cell context. Mediates the antineural activity of Notch, possibly by inhibiting the transcriptional activation mediated by MATCH1. Involved in neurogenesis, lymphogenesis and myogenesis, and may also be involved in MZB (Marginal zone B) cell differentiation. Promotes B-cell development at the expense of T-cell development, suggesting that it can antagonize NOTCH1. Functions as an ubiquitin ligase protein in vivo, mediating ubiquitination and promoting degradation of MEKK1, suggesting that it may regulate the Notch pathway via some ubiquitin ligase activity.</text>
</comment>
<comment type="catalytic activity">
    <reaction evidence="9">
        <text>S-ubiquitinyl-[E2 ubiquitin-conjugating enzyme]-L-cysteine + [acceptor protein]-L-lysine = [E2 ubiquitin-conjugating enzyme]-L-cysteine + N(6)-ubiquitinyl-[acceptor protein]-L-lysine.</text>
        <dbReference type="EC" id="2.3.2.27"/>
    </reaction>
</comment>
<comment type="pathway">
    <text>Protein modification; protein ubiquitination.</text>
</comment>
<comment type="subunit">
    <text evidence="2">Homodimer. May form a heterodimer with other members of the Deltex family. Interacts with NOTCH1 via its N-terminal region and EIF3F, the interaction is required for NOTCH1 deubiquitination. Interacts with EP300. Forms a heterodimer with BBAP; the heterodimerization leading to an increase of in vitro ubiquitin ligase activity. Interacts with ITCH.</text>
</comment>
<comment type="subcellular location">
    <subcellularLocation>
        <location evidence="2">Cytoplasm</location>
    </subcellularLocation>
    <subcellularLocation>
        <location evidence="2">Nucleus</location>
    </subcellularLocation>
    <text evidence="2">Predominantly cytoplasmic. Associates with endocytic vesicles. Partially nuclear.</text>
</comment>
<comment type="alternative products">
    <event type="alternative splicing"/>
    <isoform>
        <id>Q61010-1</id>
        <name>1</name>
        <sequence type="displayed"/>
    </isoform>
    <isoform>
        <id>Q61010-2</id>
        <name>2</name>
        <sequence type="described" ref="VSP_008348"/>
    </isoform>
    <isoform>
        <id>Q61010-3</id>
        <name>3</name>
        <sequence type="described" ref="VSP_008349"/>
    </isoform>
</comment>
<comment type="tissue specificity">
    <text evidence="7 8">Predominantly expressed in the brain and testis. Weakly expressed in the thymus, spleen and ovary. Predominantly expressed in regions containing post-mitotic differentiating neurons.</text>
</comment>
<comment type="developmental stage">
    <text evidence="7 8">In the CNS, it is expressed in the developing neural tube starting from 10.5 dpc in the spinal cord and around 11.5 dpc in the telencephalon. Expressed ubiquitously throughout the spinal cord and telencephalon during neurogenesis. Expressed throughout the developing retina from 12.5 to 15.5 dpc. Expressed in the developing thymus. Not expressed in the somite or presomite during somitogenesis. Expressed slightly later that Dtx2.</text>
</comment>
<comment type="domain">
    <text evidence="1">The WWE domains are thought to mediate some protein-protein interaction, and are frequently found in ubiquitin ligases.</text>
</comment>
<comment type="PTM">
    <text evidence="2">Ubiquitinated; undergoes 'Lys-29'-linked polyubiquitination catalyzed by ITCH.</text>
</comment>
<comment type="miscellaneous">
    <molecule>Isoform 2</molecule>
    <text evidence="12">Splicing acceptor site not canonical.</text>
</comment>
<comment type="similarity">
    <text evidence="12">Belongs to the Deltex family.</text>
</comment>
<accession>Q61010</accession>
<accession>Q3TER5</accession>
<accession>Q8C2H2</accession>
<accession>Q9ER09</accession>
<proteinExistence type="evidence at protein level"/>